<sequence length="90" mass="10380">MAGFWSKIFGNDEKPSSAQTAKDRLKVIVASEQGLGRRLSQDKIDQMKKEIMQVVSRYVRGVDEDHIQMQVRSEANIEMLEMNINLPEER</sequence>
<keyword id="KW-0131">Cell cycle</keyword>
<keyword id="KW-0132">Cell division</keyword>
<proteinExistence type="inferred from homology"/>
<feature type="chain" id="PRO_0000298064" description="Cell division topological specificity factor">
    <location>
        <begin position="1"/>
        <end position="90"/>
    </location>
</feature>
<feature type="region of interest" description="Disordered" evidence="2">
    <location>
        <begin position="1"/>
        <end position="21"/>
    </location>
</feature>
<feature type="compositionally biased region" description="Basic and acidic residues" evidence="2">
    <location>
        <begin position="10"/>
        <end position="21"/>
    </location>
</feature>
<protein>
    <recommendedName>
        <fullName evidence="1">Cell division topological specificity factor</fullName>
    </recommendedName>
</protein>
<dbReference type="EMBL" id="CR543861">
    <property type="protein sequence ID" value="CAG67791.1"/>
    <property type="molecule type" value="Genomic_DNA"/>
</dbReference>
<dbReference type="RefSeq" id="WP_004922096.1">
    <property type="nucleotide sequence ID" value="NC_005966.1"/>
</dbReference>
<dbReference type="STRING" id="202950.GCA_001485005_02641"/>
<dbReference type="GeneID" id="45233353"/>
<dbReference type="KEGG" id="aci:ACIAD0893"/>
<dbReference type="eggNOG" id="COG0851">
    <property type="taxonomic scope" value="Bacteria"/>
</dbReference>
<dbReference type="HOGENOM" id="CLU_137929_2_3_6"/>
<dbReference type="OrthoDB" id="9802655at2"/>
<dbReference type="BioCyc" id="ASP62977:ACIAD_RS04125-MONOMER"/>
<dbReference type="Proteomes" id="UP000000430">
    <property type="component" value="Chromosome"/>
</dbReference>
<dbReference type="GO" id="GO:0051301">
    <property type="term" value="P:cell division"/>
    <property type="evidence" value="ECO:0007669"/>
    <property type="project" value="UniProtKB-KW"/>
</dbReference>
<dbReference type="GO" id="GO:0032955">
    <property type="term" value="P:regulation of division septum assembly"/>
    <property type="evidence" value="ECO:0007669"/>
    <property type="project" value="InterPro"/>
</dbReference>
<dbReference type="Gene3D" id="3.30.1070.10">
    <property type="entry name" value="Cell division topological specificity factor MinE"/>
    <property type="match status" value="1"/>
</dbReference>
<dbReference type="HAMAP" id="MF_00262">
    <property type="entry name" value="MinE"/>
    <property type="match status" value="1"/>
</dbReference>
<dbReference type="InterPro" id="IPR005527">
    <property type="entry name" value="MinE"/>
</dbReference>
<dbReference type="InterPro" id="IPR036707">
    <property type="entry name" value="MinE_sf"/>
</dbReference>
<dbReference type="NCBIfam" id="TIGR01215">
    <property type="entry name" value="minE"/>
    <property type="match status" value="1"/>
</dbReference>
<dbReference type="NCBIfam" id="NF001422">
    <property type="entry name" value="PRK00296.1"/>
    <property type="match status" value="1"/>
</dbReference>
<dbReference type="Pfam" id="PF03776">
    <property type="entry name" value="MinE"/>
    <property type="match status" value="1"/>
</dbReference>
<dbReference type="SUPFAM" id="SSF55229">
    <property type="entry name" value="Cell division protein MinE topological specificity domain"/>
    <property type="match status" value="1"/>
</dbReference>
<name>MINE_ACIAD</name>
<reference key="1">
    <citation type="journal article" date="2004" name="Nucleic Acids Res.">
        <title>Unique features revealed by the genome sequence of Acinetobacter sp. ADP1, a versatile and naturally transformation competent bacterium.</title>
        <authorList>
            <person name="Barbe V."/>
            <person name="Vallenet D."/>
            <person name="Fonknechten N."/>
            <person name="Kreimeyer A."/>
            <person name="Oztas S."/>
            <person name="Labarre L."/>
            <person name="Cruveiller S."/>
            <person name="Robert C."/>
            <person name="Duprat S."/>
            <person name="Wincker P."/>
            <person name="Ornston L.N."/>
            <person name="Weissenbach J."/>
            <person name="Marliere P."/>
            <person name="Cohen G.N."/>
            <person name="Medigue C."/>
        </authorList>
    </citation>
    <scope>NUCLEOTIDE SEQUENCE [LARGE SCALE GENOMIC DNA]</scope>
    <source>
        <strain>ATCC 33305 / BD413 / ADP1</strain>
    </source>
</reference>
<accession>Q6FDR7</accession>
<comment type="function">
    <text evidence="1">Prevents the cell division inhibition by proteins MinC and MinD at internal division sites while permitting inhibition at polar sites. This ensures cell division at the proper site by restricting the formation of a division septum at the midpoint of the long axis of the cell.</text>
</comment>
<comment type="similarity">
    <text evidence="1">Belongs to the MinE family.</text>
</comment>
<evidence type="ECO:0000255" key="1">
    <source>
        <dbReference type="HAMAP-Rule" id="MF_00262"/>
    </source>
</evidence>
<evidence type="ECO:0000256" key="2">
    <source>
        <dbReference type="SAM" id="MobiDB-lite"/>
    </source>
</evidence>
<organism>
    <name type="scientific">Acinetobacter baylyi (strain ATCC 33305 / BD413 / ADP1)</name>
    <dbReference type="NCBI Taxonomy" id="62977"/>
    <lineage>
        <taxon>Bacteria</taxon>
        <taxon>Pseudomonadati</taxon>
        <taxon>Pseudomonadota</taxon>
        <taxon>Gammaproteobacteria</taxon>
        <taxon>Moraxellales</taxon>
        <taxon>Moraxellaceae</taxon>
        <taxon>Acinetobacter</taxon>
    </lineage>
</organism>
<gene>
    <name evidence="1" type="primary">minE</name>
    <name type="ordered locus">ACIAD0893</name>
</gene>